<keyword id="KW-0614">Plasmid</keyword>
<keyword id="KW-1185">Reference proteome</keyword>
<keyword id="KW-0843">Virulence</keyword>
<comment type="miscellaneous">
    <text evidence="1">Belongs to an operon involved in the translocation of Yop proteins across the bacterial membranes or in the specific control of this function.</text>
</comment>
<dbReference type="EMBL" id="AF074612">
    <property type="protein sequence ID" value="AAC69830.1"/>
    <property type="molecule type" value="Genomic_DNA"/>
</dbReference>
<dbReference type="EMBL" id="AF053946">
    <property type="protein sequence ID" value="AAC62609.1"/>
    <property type="molecule type" value="Genomic_DNA"/>
</dbReference>
<dbReference type="EMBL" id="AL117189">
    <property type="protein sequence ID" value="CAB54927.1"/>
    <property type="molecule type" value="Genomic_DNA"/>
</dbReference>
<dbReference type="EMBL" id="AE017043">
    <property type="protein sequence ID" value="AAS58552.1"/>
    <property type="molecule type" value="Genomic_DNA"/>
</dbReference>
<dbReference type="PIR" id="T43575">
    <property type="entry name" value="T43575"/>
</dbReference>
<dbReference type="RefSeq" id="NP_395184.1">
    <property type="nucleotide sequence ID" value="NC_003131.1"/>
</dbReference>
<dbReference type="RefSeq" id="NP_857732.1">
    <property type="nucleotide sequence ID" value="NC_004836.1"/>
</dbReference>
<dbReference type="RefSeq" id="NP_857927.1">
    <property type="nucleotide sequence ID" value="NC_004839.1"/>
</dbReference>
<dbReference type="RefSeq" id="WP_002229797.1">
    <property type="nucleotide sequence ID" value="NZ_WUCM01000070.1"/>
</dbReference>
<dbReference type="PaxDb" id="214092-5832470"/>
<dbReference type="EnsemblBacteria" id="AAS58552">
    <property type="protein sequence ID" value="AAS58552"/>
    <property type="gene ID" value="YP_pCD33"/>
</dbReference>
<dbReference type="KEGG" id="ype:YPCD1.50"/>
<dbReference type="KEGG" id="ypm:YP_pCD33"/>
<dbReference type="HOGENOM" id="CLU_3392090_0_0_6"/>
<dbReference type="OrthoDB" id="9887013at2"/>
<dbReference type="Proteomes" id="UP000000815">
    <property type="component" value="Plasmid pCD1"/>
</dbReference>
<dbReference type="Proteomes" id="UP000001019">
    <property type="component" value="Plasmid pCD1"/>
</dbReference>
<dbReference type="InterPro" id="IPR035181">
    <property type="entry name" value="DUF5463"/>
</dbReference>
<dbReference type="Pfam" id="PF17551">
    <property type="entry name" value="DUF5463"/>
    <property type="match status" value="1"/>
</dbReference>
<sequence>MSQISTKHRTVLFRRWMAIICCLIINIAYLVY</sequence>
<proteinExistence type="inferred from homology"/>
<gene>
    <name type="primary">yscA</name>
    <name type="ordered locus">YPCD1.50</name>
    <name type="ordered locus">y5028</name>
    <name type="ordered locus">y0031</name>
    <name type="ordered locus">YP_pCD33</name>
</gene>
<feature type="chain" id="PRO_0000066476" description="Yop proteins translocation protein A">
    <location>
        <begin position="1"/>
        <end position="32"/>
    </location>
</feature>
<name>YSCA_YERPE</name>
<evidence type="ECO:0000250" key="1"/>
<reference key="1">
    <citation type="journal article" date="1998" name="Infect. Immun.">
        <title>DNA sequencing and analysis of the low-Ca2+-response plasmid pCD1 of Yersinia pestis KIM5.</title>
        <authorList>
            <person name="Perry R.D."/>
            <person name="Straley S.C."/>
            <person name="Fetherston J.D."/>
            <person name="Rose D.J."/>
            <person name="Gregor J."/>
            <person name="Blattner F.R."/>
        </authorList>
    </citation>
    <scope>NUCLEOTIDE SEQUENCE [GENOMIC DNA]</scope>
    <source>
        <strain>KIM5 / Biovar Mediaevalis</strain>
    </source>
</reference>
<reference key="2">
    <citation type="journal article" date="1998" name="J. Bacteriol.">
        <title>Structural organization of virulence-associated plasmids of Yersinia pestis.</title>
        <authorList>
            <person name="Hu P."/>
            <person name="Elliott J."/>
            <person name="McCready P."/>
            <person name="Skowronski E."/>
            <person name="Garnes J."/>
            <person name="Kobayashi A."/>
            <person name="Brubaker R.R."/>
            <person name="Garcia E."/>
        </authorList>
    </citation>
    <scope>NUCLEOTIDE SEQUENCE [GENOMIC DNA]</scope>
    <source>
        <strain>KIM5 / Biovar Mediaevalis</strain>
    </source>
</reference>
<reference key="3">
    <citation type="journal article" date="2001" name="Nature">
        <title>Genome sequence of Yersinia pestis, the causative agent of plague.</title>
        <authorList>
            <person name="Parkhill J."/>
            <person name="Wren B.W."/>
            <person name="Thomson N.R."/>
            <person name="Titball R.W."/>
            <person name="Holden M.T.G."/>
            <person name="Prentice M.B."/>
            <person name="Sebaihia M."/>
            <person name="James K.D."/>
            <person name="Churcher C.M."/>
            <person name="Mungall K.L."/>
            <person name="Baker S."/>
            <person name="Basham D."/>
            <person name="Bentley S.D."/>
            <person name="Brooks K."/>
            <person name="Cerdeno-Tarraga A.-M."/>
            <person name="Chillingworth T."/>
            <person name="Cronin A."/>
            <person name="Davies R.M."/>
            <person name="Davis P."/>
            <person name="Dougan G."/>
            <person name="Feltwell T."/>
            <person name="Hamlin N."/>
            <person name="Holroyd S."/>
            <person name="Jagels K."/>
            <person name="Karlyshev A.V."/>
            <person name="Leather S."/>
            <person name="Moule S."/>
            <person name="Oyston P.C.F."/>
            <person name="Quail M.A."/>
            <person name="Rutherford K.M."/>
            <person name="Simmonds M."/>
            <person name="Skelton J."/>
            <person name="Stevens K."/>
            <person name="Whitehead S."/>
            <person name="Barrell B.G."/>
        </authorList>
    </citation>
    <scope>NUCLEOTIDE SEQUENCE [LARGE SCALE GENOMIC DNA]</scope>
    <source>
        <strain>CO-92 / Biovar Orientalis</strain>
    </source>
</reference>
<reference key="4">
    <citation type="journal article" date="2004" name="DNA Res.">
        <title>Complete genome sequence of Yersinia pestis strain 91001, an isolate avirulent to humans.</title>
        <authorList>
            <person name="Song Y."/>
            <person name="Tong Z."/>
            <person name="Wang J."/>
            <person name="Wang L."/>
            <person name="Guo Z."/>
            <person name="Han Y."/>
            <person name="Zhang J."/>
            <person name="Pei D."/>
            <person name="Zhou D."/>
            <person name="Qin H."/>
            <person name="Pang X."/>
            <person name="Han Y."/>
            <person name="Zhai J."/>
            <person name="Li M."/>
            <person name="Cui B."/>
            <person name="Qi Z."/>
            <person name="Jin L."/>
            <person name="Dai R."/>
            <person name="Chen F."/>
            <person name="Li S."/>
            <person name="Ye C."/>
            <person name="Du Z."/>
            <person name="Lin W."/>
            <person name="Wang J."/>
            <person name="Yu J."/>
            <person name="Yang H."/>
            <person name="Wang J."/>
            <person name="Huang P."/>
            <person name="Yang R."/>
        </authorList>
    </citation>
    <scope>NUCLEOTIDE SEQUENCE [LARGE SCALE GENOMIC DNA]</scope>
    <source>
        <strain>91001 / Biovar Mediaevalis</strain>
    </source>
</reference>
<organism>
    <name type="scientific">Yersinia pestis</name>
    <dbReference type="NCBI Taxonomy" id="632"/>
    <lineage>
        <taxon>Bacteria</taxon>
        <taxon>Pseudomonadati</taxon>
        <taxon>Pseudomonadota</taxon>
        <taxon>Gammaproteobacteria</taxon>
        <taxon>Enterobacterales</taxon>
        <taxon>Yersiniaceae</taxon>
        <taxon>Yersinia</taxon>
    </lineage>
</organism>
<protein>
    <recommendedName>
        <fullName>Yop proteins translocation protein A</fullName>
    </recommendedName>
</protein>
<geneLocation type="plasmid">
    <name>pCD1</name>
</geneLocation>
<accession>O68693</accession>